<sequence length="118" mass="13418">MNTIDMLELEQMKKNIPPFKPGDTVKVHVKIVEGDKSRIQAFQGVVIARQNGGIRESFTVRKISNGIGVERVFPLHSPSLDAIEVITRGHVRRAKLYYLRKLRGKAARIREKKYVAAH</sequence>
<name>RL19_GEOMG</name>
<comment type="function">
    <text evidence="1">This protein is located at the 30S-50S ribosomal subunit interface and may play a role in the structure and function of the aminoacyl-tRNA binding site.</text>
</comment>
<comment type="similarity">
    <text evidence="1">Belongs to the bacterial ribosomal protein bL19 family.</text>
</comment>
<protein>
    <recommendedName>
        <fullName evidence="1">Large ribosomal subunit protein bL19</fullName>
    </recommendedName>
    <alternativeName>
        <fullName evidence="2">50S ribosomal protein L19</fullName>
    </alternativeName>
</protein>
<evidence type="ECO:0000255" key="1">
    <source>
        <dbReference type="HAMAP-Rule" id="MF_00402"/>
    </source>
</evidence>
<evidence type="ECO:0000305" key="2"/>
<proteinExistence type="inferred from homology"/>
<feature type="chain" id="PRO_0000226849" description="Large ribosomal subunit protein bL19">
    <location>
        <begin position="1"/>
        <end position="118"/>
    </location>
</feature>
<gene>
    <name evidence="1" type="primary">rplS</name>
    <name type="ordered locus">Gmet_2866</name>
</gene>
<reference key="1">
    <citation type="journal article" date="2009" name="BMC Microbiol.">
        <title>The genome sequence of Geobacter metallireducens: features of metabolism, physiology and regulation common and dissimilar to Geobacter sulfurreducens.</title>
        <authorList>
            <person name="Aklujkar M."/>
            <person name="Krushkal J."/>
            <person name="DiBartolo G."/>
            <person name="Lapidus A."/>
            <person name="Land M.L."/>
            <person name="Lovley D.R."/>
        </authorList>
    </citation>
    <scope>NUCLEOTIDE SEQUENCE [LARGE SCALE GENOMIC DNA]</scope>
    <source>
        <strain>ATCC 53774 / DSM 7210 / GS-15</strain>
    </source>
</reference>
<keyword id="KW-1185">Reference proteome</keyword>
<keyword id="KW-0687">Ribonucleoprotein</keyword>
<keyword id="KW-0689">Ribosomal protein</keyword>
<organism>
    <name type="scientific">Geobacter metallireducens (strain ATCC 53774 / DSM 7210 / GS-15)</name>
    <dbReference type="NCBI Taxonomy" id="269799"/>
    <lineage>
        <taxon>Bacteria</taxon>
        <taxon>Pseudomonadati</taxon>
        <taxon>Thermodesulfobacteriota</taxon>
        <taxon>Desulfuromonadia</taxon>
        <taxon>Geobacterales</taxon>
        <taxon>Geobacteraceae</taxon>
        <taxon>Geobacter</taxon>
    </lineage>
</organism>
<dbReference type="EMBL" id="CP000148">
    <property type="protein sequence ID" value="ABB33084.1"/>
    <property type="molecule type" value="Genomic_DNA"/>
</dbReference>
<dbReference type="RefSeq" id="WP_004514597.1">
    <property type="nucleotide sequence ID" value="NC_007517.1"/>
</dbReference>
<dbReference type="SMR" id="Q39RP0"/>
<dbReference type="STRING" id="269799.Gmet_2866"/>
<dbReference type="KEGG" id="gme:Gmet_2866"/>
<dbReference type="eggNOG" id="COG0335">
    <property type="taxonomic scope" value="Bacteria"/>
</dbReference>
<dbReference type="HOGENOM" id="CLU_103507_2_1_7"/>
<dbReference type="Proteomes" id="UP000007073">
    <property type="component" value="Chromosome"/>
</dbReference>
<dbReference type="GO" id="GO:0022625">
    <property type="term" value="C:cytosolic large ribosomal subunit"/>
    <property type="evidence" value="ECO:0007669"/>
    <property type="project" value="TreeGrafter"/>
</dbReference>
<dbReference type="GO" id="GO:0003735">
    <property type="term" value="F:structural constituent of ribosome"/>
    <property type="evidence" value="ECO:0007669"/>
    <property type="project" value="InterPro"/>
</dbReference>
<dbReference type="GO" id="GO:0006412">
    <property type="term" value="P:translation"/>
    <property type="evidence" value="ECO:0007669"/>
    <property type="project" value="UniProtKB-UniRule"/>
</dbReference>
<dbReference type="FunFam" id="2.30.30.790:FF:000001">
    <property type="entry name" value="50S ribosomal protein L19"/>
    <property type="match status" value="1"/>
</dbReference>
<dbReference type="Gene3D" id="2.30.30.790">
    <property type="match status" value="1"/>
</dbReference>
<dbReference type="HAMAP" id="MF_00402">
    <property type="entry name" value="Ribosomal_bL19"/>
    <property type="match status" value="1"/>
</dbReference>
<dbReference type="InterPro" id="IPR001857">
    <property type="entry name" value="Ribosomal_bL19"/>
</dbReference>
<dbReference type="InterPro" id="IPR018257">
    <property type="entry name" value="Ribosomal_bL19_CS"/>
</dbReference>
<dbReference type="InterPro" id="IPR038657">
    <property type="entry name" value="Ribosomal_bL19_sf"/>
</dbReference>
<dbReference type="InterPro" id="IPR008991">
    <property type="entry name" value="Translation_prot_SH3-like_sf"/>
</dbReference>
<dbReference type="NCBIfam" id="TIGR01024">
    <property type="entry name" value="rplS_bact"/>
    <property type="match status" value="1"/>
</dbReference>
<dbReference type="PANTHER" id="PTHR15680:SF9">
    <property type="entry name" value="LARGE RIBOSOMAL SUBUNIT PROTEIN BL19M"/>
    <property type="match status" value="1"/>
</dbReference>
<dbReference type="PANTHER" id="PTHR15680">
    <property type="entry name" value="RIBOSOMAL PROTEIN L19"/>
    <property type="match status" value="1"/>
</dbReference>
<dbReference type="Pfam" id="PF01245">
    <property type="entry name" value="Ribosomal_L19"/>
    <property type="match status" value="1"/>
</dbReference>
<dbReference type="PIRSF" id="PIRSF002191">
    <property type="entry name" value="Ribosomal_L19"/>
    <property type="match status" value="1"/>
</dbReference>
<dbReference type="PRINTS" id="PR00061">
    <property type="entry name" value="RIBOSOMALL19"/>
</dbReference>
<dbReference type="SUPFAM" id="SSF50104">
    <property type="entry name" value="Translation proteins SH3-like domain"/>
    <property type="match status" value="1"/>
</dbReference>
<dbReference type="PROSITE" id="PS01015">
    <property type="entry name" value="RIBOSOMAL_L19"/>
    <property type="match status" value="1"/>
</dbReference>
<accession>Q39RP0</accession>